<reference key="1">
    <citation type="journal article" date="2002" name="Nucleic Acids Res.">
        <title>Genome sequence of Shigella flexneri 2a: insights into pathogenicity through comparison with genomes of Escherichia coli K12 and O157.</title>
        <authorList>
            <person name="Jin Q."/>
            <person name="Yuan Z."/>
            <person name="Xu J."/>
            <person name="Wang Y."/>
            <person name="Shen Y."/>
            <person name="Lu W."/>
            <person name="Wang J."/>
            <person name="Liu H."/>
            <person name="Yang J."/>
            <person name="Yang F."/>
            <person name="Zhang X."/>
            <person name="Zhang J."/>
            <person name="Yang G."/>
            <person name="Wu H."/>
            <person name="Qu D."/>
            <person name="Dong J."/>
            <person name="Sun L."/>
            <person name="Xue Y."/>
            <person name="Zhao A."/>
            <person name="Gao Y."/>
            <person name="Zhu J."/>
            <person name="Kan B."/>
            <person name="Ding K."/>
            <person name="Chen S."/>
            <person name="Cheng H."/>
            <person name="Yao Z."/>
            <person name="He B."/>
            <person name="Chen R."/>
            <person name="Ma D."/>
            <person name="Qiang B."/>
            <person name="Wen Y."/>
            <person name="Hou Y."/>
            <person name="Yu J."/>
        </authorList>
    </citation>
    <scope>NUCLEOTIDE SEQUENCE [LARGE SCALE GENOMIC DNA]</scope>
    <source>
        <strain>301 / Serotype 2a</strain>
    </source>
</reference>
<reference key="2">
    <citation type="journal article" date="2003" name="Infect. Immun.">
        <title>Complete genome sequence and comparative genomics of Shigella flexneri serotype 2a strain 2457T.</title>
        <authorList>
            <person name="Wei J."/>
            <person name="Goldberg M.B."/>
            <person name="Burland V."/>
            <person name="Venkatesan M.M."/>
            <person name="Deng W."/>
            <person name="Fournier G."/>
            <person name="Mayhew G.F."/>
            <person name="Plunkett G. III"/>
            <person name="Rose D.J."/>
            <person name="Darling A."/>
            <person name="Mau B."/>
            <person name="Perna N.T."/>
            <person name="Payne S.M."/>
            <person name="Runyen-Janecky L.J."/>
            <person name="Zhou S."/>
            <person name="Schwartz D.C."/>
            <person name="Blattner F.R."/>
        </authorList>
    </citation>
    <scope>NUCLEOTIDE SEQUENCE [LARGE SCALE GENOMIC DNA]</scope>
    <source>
        <strain>ATCC 700930 / 2457T / Serotype 2a</strain>
    </source>
</reference>
<gene>
    <name type="primary">ybeD</name>
    <name type="ordered locus">SF0650</name>
    <name type="ordered locus">S0672</name>
</gene>
<organism>
    <name type="scientific">Shigella flexneri</name>
    <dbReference type="NCBI Taxonomy" id="623"/>
    <lineage>
        <taxon>Bacteria</taxon>
        <taxon>Pseudomonadati</taxon>
        <taxon>Pseudomonadota</taxon>
        <taxon>Gammaproteobacteria</taxon>
        <taxon>Enterobacterales</taxon>
        <taxon>Enterobacteriaceae</taxon>
        <taxon>Shigella</taxon>
    </lineage>
</organism>
<accession>P0A8J7</accession>
<accession>P30977</accession>
<sequence>MKTKLNELLEFPTPFTYKVMGQALPELVDQVVEVVQRHAPGDYTPTVKPSSKGNYHSVSITINATHIEQVETLYEELGKIDIVRMVL</sequence>
<feature type="chain" id="PRO_0000209313" description="UPF0250 protein YbeD">
    <location>
        <begin position="1"/>
        <end position="87"/>
    </location>
</feature>
<name>YBED_SHIFL</name>
<evidence type="ECO:0000305" key="1"/>
<protein>
    <recommendedName>
        <fullName>UPF0250 protein YbeD</fullName>
    </recommendedName>
</protein>
<keyword id="KW-1185">Reference proteome</keyword>
<dbReference type="EMBL" id="AE005674">
    <property type="protein sequence ID" value="AAN42286.1"/>
    <property type="molecule type" value="Genomic_DNA"/>
</dbReference>
<dbReference type="EMBL" id="AE014073">
    <property type="protein sequence ID" value="AAP16157.1"/>
    <property type="molecule type" value="Genomic_DNA"/>
</dbReference>
<dbReference type="RefSeq" id="NP_706579.1">
    <property type="nucleotide sequence ID" value="NC_004337.2"/>
</dbReference>
<dbReference type="RefSeq" id="WP_000850550.1">
    <property type="nucleotide sequence ID" value="NZ_WPGW01000002.1"/>
</dbReference>
<dbReference type="SMR" id="P0A8J7"/>
<dbReference type="STRING" id="198214.SF0650"/>
<dbReference type="PaxDb" id="198214-SF0650"/>
<dbReference type="GeneID" id="1023602"/>
<dbReference type="GeneID" id="93776851"/>
<dbReference type="KEGG" id="sfl:SF0650"/>
<dbReference type="KEGG" id="sfx:S0672"/>
<dbReference type="PATRIC" id="fig|198214.7.peg.757"/>
<dbReference type="HOGENOM" id="CLU_161438_2_1_6"/>
<dbReference type="Proteomes" id="UP000001006">
    <property type="component" value="Chromosome"/>
</dbReference>
<dbReference type="Proteomes" id="UP000002673">
    <property type="component" value="Chromosome"/>
</dbReference>
<dbReference type="GO" id="GO:0005829">
    <property type="term" value="C:cytosol"/>
    <property type="evidence" value="ECO:0007669"/>
    <property type="project" value="TreeGrafter"/>
</dbReference>
<dbReference type="FunFam" id="3.30.70.260:FF:000002">
    <property type="entry name" value="UPF0250 protein YbeD"/>
    <property type="match status" value="1"/>
</dbReference>
<dbReference type="Gene3D" id="3.30.70.260">
    <property type="match status" value="1"/>
</dbReference>
<dbReference type="HAMAP" id="MF_00659">
    <property type="entry name" value="UPF0250"/>
    <property type="match status" value="1"/>
</dbReference>
<dbReference type="InterPro" id="IPR007454">
    <property type="entry name" value="UPF0250_YbeD-like"/>
</dbReference>
<dbReference type="InterPro" id="IPR027471">
    <property type="entry name" value="YbeD-like_sf"/>
</dbReference>
<dbReference type="NCBIfam" id="NF003447">
    <property type="entry name" value="PRK04998.1"/>
    <property type="match status" value="1"/>
</dbReference>
<dbReference type="PANTHER" id="PTHR38036">
    <property type="entry name" value="UPF0250 PROTEIN YBED"/>
    <property type="match status" value="1"/>
</dbReference>
<dbReference type="PANTHER" id="PTHR38036:SF1">
    <property type="entry name" value="UPF0250 PROTEIN YBED"/>
    <property type="match status" value="1"/>
</dbReference>
<dbReference type="Pfam" id="PF04359">
    <property type="entry name" value="DUF493"/>
    <property type="match status" value="1"/>
</dbReference>
<dbReference type="SUPFAM" id="SSF117991">
    <property type="entry name" value="YbeD/HP0495-like"/>
    <property type="match status" value="1"/>
</dbReference>
<proteinExistence type="inferred from homology"/>
<comment type="similarity">
    <text evidence="1">Belongs to the UPF0250 family.</text>
</comment>